<protein>
    <recommendedName>
        <fullName>Taste receptor type 2 member 46</fullName>
        <shortName>T2R46</shortName>
    </recommendedName>
</protein>
<name>T2R46_PANPA</name>
<evidence type="ECO:0000250" key="1"/>
<evidence type="ECO:0000255" key="2"/>
<evidence type="ECO:0000305" key="3"/>
<reference key="1">
    <citation type="journal article" date="2005" name="Mol. Biol. Evol.">
        <title>Evolution of bitter taste receptors in humans and apes.</title>
        <authorList>
            <person name="Fischer A."/>
            <person name="Gilad Y."/>
            <person name="Man O."/>
            <person name="Paeaebo S."/>
        </authorList>
    </citation>
    <scope>NUCLEOTIDE SEQUENCE [GENOMIC DNA]</scope>
</reference>
<reference key="2">
    <citation type="journal article" date="2004" name="Proc. Natl. Acad. Sci. U.S.A.">
        <title>Divergence of T2R chemosensory receptor families in humans, bonobos, and chimpanzees.</title>
        <authorList>
            <person name="Parry C.M."/>
            <person name="Erkner A."/>
            <person name="le Coutre J."/>
        </authorList>
    </citation>
    <scope>NUCLEOTIDE SEQUENCE [GENOMIC DNA]</scope>
</reference>
<comment type="function">
    <text evidence="1">Receptor that may play a role in the perception of bitterness and is gustducin-linked. May play a role in sensing the chemical composition of the gastrointestinal content. The activity of this receptor may stimulate alpha gustducin, mediate PLC-beta-2 activation and lead to the gating of TRPM5 (By similarity). In airway epithelial cells, binding of bitter compounds increases the intracellular calcium ion concentration and stimulates ciliary beat frequency (By similarity).</text>
</comment>
<comment type="subcellular location">
    <subcellularLocation>
        <location>Membrane</location>
        <topology>Multi-pass membrane protein</topology>
    </subcellularLocation>
    <subcellularLocation>
        <location>Cell projection</location>
        <location>Cilium membrane</location>
    </subcellularLocation>
    <text evidence="1">In airway epithelial cells, localizes to motile cilia.</text>
</comment>
<comment type="miscellaneous">
    <text>Most taste cells may be activated by a limited number of bitter compounds; individual taste cells can discriminate among bitter stimuli.</text>
</comment>
<comment type="similarity">
    <text evidence="3">Belongs to the G-protein coupled receptor T2R family.</text>
</comment>
<keyword id="KW-1003">Cell membrane</keyword>
<keyword id="KW-0966">Cell projection</keyword>
<keyword id="KW-0969">Cilium</keyword>
<keyword id="KW-0297">G-protein coupled receptor</keyword>
<keyword id="KW-0325">Glycoprotein</keyword>
<keyword id="KW-0472">Membrane</keyword>
<keyword id="KW-0675">Receptor</keyword>
<keyword id="KW-1185">Reference proteome</keyword>
<keyword id="KW-0716">Sensory transduction</keyword>
<keyword id="KW-0919">Taste</keyword>
<keyword id="KW-0807">Transducer</keyword>
<keyword id="KW-0812">Transmembrane</keyword>
<keyword id="KW-1133">Transmembrane helix</keyword>
<feature type="chain" id="PRO_0000082320" description="Taste receptor type 2 member 46">
    <location>
        <begin position="1"/>
        <end position="309"/>
    </location>
</feature>
<feature type="topological domain" description="Extracellular" evidence="2">
    <location>
        <position position="1"/>
    </location>
</feature>
<feature type="transmembrane region" description="Helical; Name=1" evidence="2">
    <location>
        <begin position="2"/>
        <end position="22"/>
    </location>
</feature>
<feature type="topological domain" description="Cytoplasmic" evidence="2">
    <location>
        <begin position="23"/>
        <end position="46"/>
    </location>
</feature>
<feature type="transmembrane region" description="Helical; Name=2" evidence="2">
    <location>
        <begin position="47"/>
        <end position="67"/>
    </location>
</feature>
<feature type="topological domain" description="Extracellular" evidence="2">
    <location>
        <begin position="68"/>
        <end position="86"/>
    </location>
</feature>
<feature type="transmembrane region" description="Helical; Name=3" evidence="2">
    <location>
        <begin position="87"/>
        <end position="107"/>
    </location>
</feature>
<feature type="topological domain" description="Cytoplasmic" evidence="2">
    <location>
        <begin position="108"/>
        <end position="126"/>
    </location>
</feature>
<feature type="transmembrane region" description="Helical; Name=4" evidence="2">
    <location>
        <begin position="127"/>
        <end position="147"/>
    </location>
</feature>
<feature type="topological domain" description="Extracellular" evidence="2">
    <location>
        <begin position="148"/>
        <end position="178"/>
    </location>
</feature>
<feature type="transmembrane region" description="Helical; Name=5" evidence="2">
    <location>
        <begin position="179"/>
        <end position="199"/>
    </location>
</feature>
<feature type="topological domain" description="Cytoplasmic" evidence="2">
    <location>
        <begin position="200"/>
        <end position="229"/>
    </location>
</feature>
<feature type="transmembrane region" description="Helical; Name=6" evidence="2">
    <location>
        <begin position="230"/>
        <end position="250"/>
    </location>
</feature>
<feature type="topological domain" description="Extracellular" evidence="2">
    <location>
        <begin position="251"/>
        <end position="259"/>
    </location>
</feature>
<feature type="transmembrane region" description="Helical; Name=7" evidence="2">
    <location>
        <begin position="260"/>
        <end position="280"/>
    </location>
</feature>
<feature type="topological domain" description="Cytoplasmic" evidence="2">
    <location>
        <begin position="281"/>
        <end position="309"/>
    </location>
</feature>
<feature type="glycosylation site" description="N-linked (GlcNAc...) asparagine" evidence="2">
    <location>
        <position position="161"/>
    </location>
</feature>
<feature type="glycosylation site" description="N-linked (GlcNAc...) asparagine" evidence="2">
    <location>
        <position position="176"/>
    </location>
</feature>
<feature type="sequence conflict" description="In Ref. 2; AAV28578." evidence="3" ref="2">
    <original>I</original>
    <variation>T</variation>
    <location>
        <position position="177"/>
    </location>
</feature>
<feature type="sequence conflict" description="In Ref. 2; AAV28578." evidence="3" ref="2">
    <original>E</original>
    <variation>K</variation>
    <location>
        <position position="305"/>
    </location>
</feature>
<feature type="sequence conflict" description="In Ref. 2; AAV28578." evidence="3" ref="2">
    <original>P</original>
    <variation>S</variation>
    <location>
        <position position="309"/>
    </location>
</feature>
<proteinExistence type="inferred from homology"/>
<gene>
    <name type="primary">TAS2R46</name>
</gene>
<organism>
    <name type="scientific">Pan paniscus</name>
    <name type="common">Pygmy chimpanzee</name>
    <name type="synonym">Bonobo</name>
    <dbReference type="NCBI Taxonomy" id="9597"/>
    <lineage>
        <taxon>Eukaryota</taxon>
        <taxon>Metazoa</taxon>
        <taxon>Chordata</taxon>
        <taxon>Craniata</taxon>
        <taxon>Vertebrata</taxon>
        <taxon>Euteleostomi</taxon>
        <taxon>Mammalia</taxon>
        <taxon>Eutheria</taxon>
        <taxon>Euarchontoglires</taxon>
        <taxon>Primates</taxon>
        <taxon>Haplorrhini</taxon>
        <taxon>Catarrhini</taxon>
        <taxon>Hominidae</taxon>
        <taxon>Pan</taxon>
    </lineage>
</organism>
<dbReference type="EMBL" id="AY724848">
    <property type="protein sequence ID" value="AAU21078.1"/>
    <property type="molecule type" value="Genomic_DNA"/>
</dbReference>
<dbReference type="EMBL" id="AY677150">
    <property type="protein sequence ID" value="AAV28578.1"/>
    <property type="molecule type" value="Genomic_DNA"/>
</dbReference>
<dbReference type="SMR" id="Q646E1"/>
<dbReference type="STRING" id="9597.ENSPPAP00000006165"/>
<dbReference type="GlyCosmos" id="Q646E1">
    <property type="glycosylation" value="2 sites, No reported glycans"/>
</dbReference>
<dbReference type="eggNOG" id="ENOG502TE6U">
    <property type="taxonomic scope" value="Eukaryota"/>
</dbReference>
<dbReference type="Proteomes" id="UP000240080">
    <property type="component" value="Unplaced"/>
</dbReference>
<dbReference type="GO" id="GO:0060170">
    <property type="term" value="C:ciliary membrane"/>
    <property type="evidence" value="ECO:0007669"/>
    <property type="project" value="UniProtKB-SubCell"/>
</dbReference>
<dbReference type="GO" id="GO:0033038">
    <property type="term" value="F:bitter taste receptor activity"/>
    <property type="evidence" value="ECO:0007669"/>
    <property type="project" value="InterPro"/>
</dbReference>
<dbReference type="GO" id="GO:0004930">
    <property type="term" value="F:G protein-coupled receptor activity"/>
    <property type="evidence" value="ECO:0007669"/>
    <property type="project" value="UniProtKB-KW"/>
</dbReference>
<dbReference type="CDD" id="cd15027">
    <property type="entry name" value="7tm_TAS2R43-like"/>
    <property type="match status" value="1"/>
</dbReference>
<dbReference type="FunFam" id="1.20.1070.10:FF:000042">
    <property type="entry name" value="Taste receptor type 2 member 7"/>
    <property type="match status" value="1"/>
</dbReference>
<dbReference type="Gene3D" id="1.20.1070.10">
    <property type="entry name" value="Rhodopsin 7-helix transmembrane proteins"/>
    <property type="match status" value="1"/>
</dbReference>
<dbReference type="InterPro" id="IPR007960">
    <property type="entry name" value="TAS2R"/>
</dbReference>
<dbReference type="PANTHER" id="PTHR11394">
    <property type="entry name" value="TASTE RECEPTOR TYPE 2"/>
    <property type="match status" value="1"/>
</dbReference>
<dbReference type="PANTHER" id="PTHR11394:SF66">
    <property type="entry name" value="TASTE RECEPTOR TYPE 2 MEMBER 46"/>
    <property type="match status" value="1"/>
</dbReference>
<dbReference type="Pfam" id="PF05296">
    <property type="entry name" value="TAS2R"/>
    <property type="match status" value="1"/>
</dbReference>
<dbReference type="SUPFAM" id="SSF81321">
    <property type="entry name" value="Family A G protein-coupled receptor-like"/>
    <property type="match status" value="1"/>
</dbReference>
<sequence length="309" mass="35644">MITFLPIIFSILIVVTFVIGNFANGFIALANSIEWFKRQKISFADQILTALAVSRVGLLWVLLLNWYATELNPAFYSIEVRITAYNLWAVINHFSNWLATSLSIFYLLKIANFSNLIFLRLKRRVKSVVLVILLGPLLFLVCHLFVINMNQIIWTKEYEGNMTWKIKLRSAMYLSNITVTILANLVPFTLTLISFLLLICSLCKHLKKMQLHGKGSQDPSMKVHIKALQTVTSFLLLCAIYFLSIIMSVWSFESLENKPVFMFCEAITFSYPSTHPFILIWGNKKLKQTFLSVLWHVRYWVKGEEPSSP</sequence>
<accession>Q646E1</accession>
<accession>Q5Y4Z7</accession>